<organism>
    <name type="scientific">Mus musculus</name>
    <name type="common">Mouse</name>
    <dbReference type="NCBI Taxonomy" id="10090"/>
    <lineage>
        <taxon>Eukaryota</taxon>
        <taxon>Metazoa</taxon>
        <taxon>Chordata</taxon>
        <taxon>Craniata</taxon>
        <taxon>Vertebrata</taxon>
        <taxon>Euteleostomi</taxon>
        <taxon>Mammalia</taxon>
        <taxon>Eutheria</taxon>
        <taxon>Euarchontoglires</taxon>
        <taxon>Glires</taxon>
        <taxon>Rodentia</taxon>
        <taxon>Myomorpha</taxon>
        <taxon>Muroidea</taxon>
        <taxon>Muridae</taxon>
        <taxon>Murinae</taxon>
        <taxon>Mus</taxon>
        <taxon>Mus</taxon>
    </lineage>
</organism>
<feature type="chain" id="PRO_0000307308" description="Solute carrier family 35 member F1">
    <location>
        <begin position="1"/>
        <end position="408"/>
    </location>
</feature>
<feature type="transmembrane region" description="Helical" evidence="2">
    <location>
        <begin position="60"/>
        <end position="80"/>
    </location>
</feature>
<feature type="transmembrane region" description="Helical" evidence="2">
    <location>
        <begin position="94"/>
        <end position="114"/>
    </location>
</feature>
<feature type="transmembrane region" description="Helical" evidence="2">
    <location>
        <begin position="129"/>
        <end position="147"/>
    </location>
</feature>
<feature type="transmembrane region" description="Helical" evidence="2">
    <location>
        <begin position="159"/>
        <end position="179"/>
    </location>
</feature>
<feature type="transmembrane region" description="Helical" evidence="2">
    <location>
        <begin position="186"/>
        <end position="206"/>
    </location>
</feature>
<feature type="transmembrane region" description="Helical" evidence="2">
    <location>
        <begin position="221"/>
        <end position="241"/>
    </location>
</feature>
<feature type="transmembrane region" description="Helical" evidence="2">
    <location>
        <begin position="247"/>
        <end position="267"/>
    </location>
</feature>
<feature type="transmembrane region" description="Helical" evidence="2">
    <location>
        <begin position="284"/>
        <end position="304"/>
    </location>
</feature>
<feature type="transmembrane region" description="Helical" evidence="2">
    <location>
        <begin position="311"/>
        <end position="331"/>
    </location>
</feature>
<feature type="transmembrane region" description="Helical" evidence="2">
    <location>
        <begin position="335"/>
        <end position="355"/>
    </location>
</feature>
<feature type="region of interest" description="Disordered" evidence="3">
    <location>
        <begin position="1"/>
        <end position="20"/>
    </location>
</feature>
<feature type="sequence conflict" description="In Ref. 1; BAC33499." evidence="4" ref="1">
    <original>P</original>
    <variation>S</variation>
    <location>
        <position position="3"/>
    </location>
</feature>
<feature type="sequence conflict" description="In Ref. 1; BAE38004." evidence="4" ref="1">
    <original>L</original>
    <variation>Q</variation>
    <location>
        <position position="112"/>
    </location>
</feature>
<feature type="sequence conflict" description="In Ref. 1; BAC35422." evidence="4" ref="1">
    <original>C</original>
    <variation>F</variation>
    <location>
        <position position="326"/>
    </location>
</feature>
<protein>
    <recommendedName>
        <fullName>Solute carrier family 35 member F1</fullName>
    </recommendedName>
</protein>
<comment type="function">
    <text evidence="4">Putative solute transporter.</text>
</comment>
<comment type="subcellular location">
    <subcellularLocation>
        <location evidence="1">Cytoplasmic vesicle</location>
        <location evidence="1">Secretory vesicle</location>
        <location evidence="1">Synaptic vesicle membrane</location>
        <topology evidence="2">Multi-pass membrane protein</topology>
    </subcellularLocation>
</comment>
<comment type="similarity">
    <text evidence="4">Belongs to the SLC35F solute transporter family.</text>
</comment>
<comment type="sequence caution" evidence="4">
    <conflict type="miscellaneous discrepancy">
        <sequence resource="EMBL-CDS" id="BAC37158"/>
    </conflict>
    <text>Chimeric cDNA.</text>
</comment>
<keyword id="KW-0968">Cytoplasmic vesicle</keyword>
<keyword id="KW-0472">Membrane</keyword>
<keyword id="KW-1185">Reference proteome</keyword>
<keyword id="KW-0770">Synapse</keyword>
<keyword id="KW-0812">Transmembrane</keyword>
<keyword id="KW-1133">Transmembrane helix</keyword>
<keyword id="KW-0813">Transport</keyword>
<accession>Q8BGK5</accession>
<accession>Q3TNT3</accession>
<accession>Q8BKD4</accession>
<accession>Q8BVI2</accession>
<accession>Q8BX52</accession>
<gene>
    <name type="primary">Slc35f1</name>
</gene>
<name>S35F1_MOUSE</name>
<evidence type="ECO:0000250" key="1">
    <source>
        <dbReference type="UniProtKB" id="Q5T1Q4"/>
    </source>
</evidence>
<evidence type="ECO:0000255" key="2"/>
<evidence type="ECO:0000256" key="3">
    <source>
        <dbReference type="SAM" id="MobiDB-lite"/>
    </source>
</evidence>
<evidence type="ECO:0000305" key="4"/>
<dbReference type="EMBL" id="AK038601">
    <property type="protein sequence ID" value="BAC30061.1"/>
    <property type="molecule type" value="mRNA"/>
</dbReference>
<dbReference type="EMBL" id="AK048957">
    <property type="protein sequence ID" value="BAC33499.1"/>
    <property type="molecule type" value="mRNA"/>
</dbReference>
<dbReference type="EMBL" id="AK053426">
    <property type="protein sequence ID" value="BAC35383.1"/>
    <property type="molecule type" value="mRNA"/>
</dbReference>
<dbReference type="EMBL" id="AK053545">
    <property type="protein sequence ID" value="BAC35422.1"/>
    <property type="molecule type" value="mRNA"/>
</dbReference>
<dbReference type="EMBL" id="AK078169">
    <property type="protein sequence ID" value="BAC37158.1"/>
    <property type="status" value="ALT_SEQ"/>
    <property type="molecule type" value="mRNA"/>
</dbReference>
<dbReference type="EMBL" id="AK083768">
    <property type="protein sequence ID" value="BAC39016.1"/>
    <property type="molecule type" value="mRNA"/>
</dbReference>
<dbReference type="EMBL" id="AK139331">
    <property type="protein sequence ID" value="BAE23959.1"/>
    <property type="molecule type" value="mRNA"/>
</dbReference>
<dbReference type="EMBL" id="AK165021">
    <property type="protein sequence ID" value="BAE38004.1"/>
    <property type="molecule type" value="mRNA"/>
</dbReference>
<dbReference type="EMBL" id="BC059075">
    <property type="protein sequence ID" value="AAH59075.1"/>
    <property type="molecule type" value="mRNA"/>
</dbReference>
<dbReference type="CCDS" id="CCDS23843.1"/>
<dbReference type="RefSeq" id="NP_848790.2">
    <property type="nucleotide sequence ID" value="NM_178675.4"/>
</dbReference>
<dbReference type="SMR" id="Q8BGK5"/>
<dbReference type="FunCoup" id="Q8BGK5">
    <property type="interactions" value="48"/>
</dbReference>
<dbReference type="STRING" id="10090.ENSMUSP00000101113"/>
<dbReference type="iPTMnet" id="Q8BGK5"/>
<dbReference type="PhosphoSitePlus" id="Q8BGK5"/>
<dbReference type="PaxDb" id="10090-ENSMUSP00000101113"/>
<dbReference type="PeptideAtlas" id="Q8BGK5"/>
<dbReference type="ProteomicsDB" id="256678"/>
<dbReference type="Antibodypedia" id="19478">
    <property type="antibodies" value="25 antibodies from 13 providers"/>
</dbReference>
<dbReference type="DNASU" id="215085"/>
<dbReference type="Ensembl" id="ENSMUST00000105473.3">
    <property type="protein sequence ID" value="ENSMUSP00000101113.3"/>
    <property type="gene ID" value="ENSMUSG00000038602.8"/>
</dbReference>
<dbReference type="GeneID" id="215085"/>
<dbReference type="KEGG" id="mmu:215085"/>
<dbReference type="UCSC" id="uc007fbk.2">
    <property type="organism name" value="mouse"/>
</dbReference>
<dbReference type="AGR" id="MGI:2139810"/>
<dbReference type="CTD" id="222553"/>
<dbReference type="MGI" id="MGI:2139810">
    <property type="gene designation" value="Slc35f1"/>
</dbReference>
<dbReference type="VEuPathDB" id="HostDB:ENSMUSG00000038602"/>
<dbReference type="eggNOG" id="KOG2766">
    <property type="taxonomic scope" value="Eukaryota"/>
</dbReference>
<dbReference type="GeneTree" id="ENSGT00390000015655"/>
<dbReference type="HOGENOM" id="CLU_039639_0_0_1"/>
<dbReference type="InParanoid" id="Q8BGK5"/>
<dbReference type="OMA" id="VRYHWAQ"/>
<dbReference type="OrthoDB" id="429955at2759"/>
<dbReference type="PhylomeDB" id="Q8BGK5"/>
<dbReference type="TreeFam" id="TF313645"/>
<dbReference type="BioGRID-ORCS" id="215085">
    <property type="hits" value="1 hit in 76 CRISPR screens"/>
</dbReference>
<dbReference type="ChiTaRS" id="Slc35f1">
    <property type="organism name" value="mouse"/>
</dbReference>
<dbReference type="PRO" id="PR:Q8BGK5"/>
<dbReference type="Proteomes" id="UP000000589">
    <property type="component" value="Chromosome 10"/>
</dbReference>
<dbReference type="RNAct" id="Q8BGK5">
    <property type="molecule type" value="protein"/>
</dbReference>
<dbReference type="Bgee" id="ENSMUSG00000038602">
    <property type="expression patterns" value="Expressed in humerus cartilage element and 156 other cell types or tissues"/>
</dbReference>
<dbReference type="GO" id="GO:0030672">
    <property type="term" value="C:synaptic vesicle membrane"/>
    <property type="evidence" value="ECO:0007669"/>
    <property type="project" value="UniProtKB-SubCell"/>
</dbReference>
<dbReference type="GO" id="GO:0022857">
    <property type="term" value="F:transmembrane transporter activity"/>
    <property type="evidence" value="ECO:0007669"/>
    <property type="project" value="InterPro"/>
</dbReference>
<dbReference type="InterPro" id="IPR009262">
    <property type="entry name" value="SLC35_F1/F2/F6"/>
</dbReference>
<dbReference type="InterPro" id="IPR052221">
    <property type="entry name" value="SLC35F_Transporter"/>
</dbReference>
<dbReference type="PANTHER" id="PTHR14233">
    <property type="entry name" value="DUF914-RELATED"/>
    <property type="match status" value="1"/>
</dbReference>
<dbReference type="PANTHER" id="PTHR14233:SF10">
    <property type="entry name" value="SOLUTE CARRIER FAMILY 35 MEMBER F1"/>
    <property type="match status" value="1"/>
</dbReference>
<dbReference type="Pfam" id="PF06027">
    <property type="entry name" value="SLC35F"/>
    <property type="match status" value="1"/>
</dbReference>
<dbReference type="SUPFAM" id="SSF103481">
    <property type="entry name" value="Multidrug resistance efflux transporter EmrE"/>
    <property type="match status" value="1"/>
</dbReference>
<sequence length="408" mass="45304">MIPPEPPQPQLQPPPPPAPPNHVVTTIENLPAEGSGGVSLSASSRASMRQRIRKVLNREMLISVALGQVLSLLVCGIGLTSKYLAEDFHANTPVFQSFLNYILLFLVYTTTLAVRQGEENLLAILRRRWWKYMILGLIDLEANYLVVKAYQYTTLTSVQLLDCFVIPVVILLSWFFLLIRYKAVHFIGIVVCILGMGCMVGADVLVGRHQGAGENKLVGDLLVLGGATLYGISNVWEESIIRTLSRVEFLGMIGLFGAFFSGIQLAIMEHKELLKVPWDWQIGLLYVGFSACMFGLYSFMPVVIKKTSATSVNLSLLTADLYSLFCGLFLFHYKFSGLYLLSFFTILIGLVLYSSTSTYIAQDPRVYKQFRNPSGPVVDLPSTAQVEPSVTYTSLGQETEEEPHVRVA</sequence>
<reference key="1">
    <citation type="journal article" date="2005" name="Science">
        <title>The transcriptional landscape of the mammalian genome.</title>
        <authorList>
            <person name="Carninci P."/>
            <person name="Kasukawa T."/>
            <person name="Katayama S."/>
            <person name="Gough J."/>
            <person name="Frith M.C."/>
            <person name="Maeda N."/>
            <person name="Oyama R."/>
            <person name="Ravasi T."/>
            <person name="Lenhard B."/>
            <person name="Wells C."/>
            <person name="Kodzius R."/>
            <person name="Shimokawa K."/>
            <person name="Bajic V.B."/>
            <person name="Brenner S.E."/>
            <person name="Batalov S."/>
            <person name="Forrest A.R."/>
            <person name="Zavolan M."/>
            <person name="Davis M.J."/>
            <person name="Wilming L.G."/>
            <person name="Aidinis V."/>
            <person name="Allen J.E."/>
            <person name="Ambesi-Impiombato A."/>
            <person name="Apweiler R."/>
            <person name="Aturaliya R.N."/>
            <person name="Bailey T.L."/>
            <person name="Bansal M."/>
            <person name="Baxter L."/>
            <person name="Beisel K.W."/>
            <person name="Bersano T."/>
            <person name="Bono H."/>
            <person name="Chalk A.M."/>
            <person name="Chiu K.P."/>
            <person name="Choudhary V."/>
            <person name="Christoffels A."/>
            <person name="Clutterbuck D.R."/>
            <person name="Crowe M.L."/>
            <person name="Dalla E."/>
            <person name="Dalrymple B.P."/>
            <person name="de Bono B."/>
            <person name="Della Gatta G."/>
            <person name="di Bernardo D."/>
            <person name="Down T."/>
            <person name="Engstrom P."/>
            <person name="Fagiolini M."/>
            <person name="Faulkner G."/>
            <person name="Fletcher C.F."/>
            <person name="Fukushima T."/>
            <person name="Furuno M."/>
            <person name="Futaki S."/>
            <person name="Gariboldi M."/>
            <person name="Georgii-Hemming P."/>
            <person name="Gingeras T.R."/>
            <person name="Gojobori T."/>
            <person name="Green R.E."/>
            <person name="Gustincich S."/>
            <person name="Harbers M."/>
            <person name="Hayashi Y."/>
            <person name="Hensch T.K."/>
            <person name="Hirokawa N."/>
            <person name="Hill D."/>
            <person name="Huminiecki L."/>
            <person name="Iacono M."/>
            <person name="Ikeo K."/>
            <person name="Iwama A."/>
            <person name="Ishikawa T."/>
            <person name="Jakt M."/>
            <person name="Kanapin A."/>
            <person name="Katoh M."/>
            <person name="Kawasawa Y."/>
            <person name="Kelso J."/>
            <person name="Kitamura H."/>
            <person name="Kitano H."/>
            <person name="Kollias G."/>
            <person name="Krishnan S.P."/>
            <person name="Kruger A."/>
            <person name="Kummerfeld S.K."/>
            <person name="Kurochkin I.V."/>
            <person name="Lareau L.F."/>
            <person name="Lazarevic D."/>
            <person name="Lipovich L."/>
            <person name="Liu J."/>
            <person name="Liuni S."/>
            <person name="McWilliam S."/>
            <person name="Madan Babu M."/>
            <person name="Madera M."/>
            <person name="Marchionni L."/>
            <person name="Matsuda H."/>
            <person name="Matsuzawa S."/>
            <person name="Miki H."/>
            <person name="Mignone F."/>
            <person name="Miyake S."/>
            <person name="Morris K."/>
            <person name="Mottagui-Tabar S."/>
            <person name="Mulder N."/>
            <person name="Nakano N."/>
            <person name="Nakauchi H."/>
            <person name="Ng P."/>
            <person name="Nilsson R."/>
            <person name="Nishiguchi S."/>
            <person name="Nishikawa S."/>
            <person name="Nori F."/>
            <person name="Ohara O."/>
            <person name="Okazaki Y."/>
            <person name="Orlando V."/>
            <person name="Pang K.C."/>
            <person name="Pavan W.J."/>
            <person name="Pavesi G."/>
            <person name="Pesole G."/>
            <person name="Petrovsky N."/>
            <person name="Piazza S."/>
            <person name="Reed J."/>
            <person name="Reid J.F."/>
            <person name="Ring B.Z."/>
            <person name="Ringwald M."/>
            <person name="Rost B."/>
            <person name="Ruan Y."/>
            <person name="Salzberg S.L."/>
            <person name="Sandelin A."/>
            <person name="Schneider C."/>
            <person name="Schoenbach C."/>
            <person name="Sekiguchi K."/>
            <person name="Semple C.A."/>
            <person name="Seno S."/>
            <person name="Sessa L."/>
            <person name="Sheng Y."/>
            <person name="Shibata Y."/>
            <person name="Shimada H."/>
            <person name="Shimada K."/>
            <person name="Silva D."/>
            <person name="Sinclair B."/>
            <person name="Sperling S."/>
            <person name="Stupka E."/>
            <person name="Sugiura K."/>
            <person name="Sultana R."/>
            <person name="Takenaka Y."/>
            <person name="Taki K."/>
            <person name="Tammoja K."/>
            <person name="Tan S.L."/>
            <person name="Tang S."/>
            <person name="Taylor M.S."/>
            <person name="Tegner J."/>
            <person name="Teichmann S.A."/>
            <person name="Ueda H.R."/>
            <person name="van Nimwegen E."/>
            <person name="Verardo R."/>
            <person name="Wei C.L."/>
            <person name="Yagi K."/>
            <person name="Yamanishi H."/>
            <person name="Zabarovsky E."/>
            <person name="Zhu S."/>
            <person name="Zimmer A."/>
            <person name="Hide W."/>
            <person name="Bult C."/>
            <person name="Grimmond S.M."/>
            <person name="Teasdale R.D."/>
            <person name="Liu E.T."/>
            <person name="Brusic V."/>
            <person name="Quackenbush J."/>
            <person name="Wahlestedt C."/>
            <person name="Mattick J.S."/>
            <person name="Hume D.A."/>
            <person name="Kai C."/>
            <person name="Sasaki D."/>
            <person name="Tomaru Y."/>
            <person name="Fukuda S."/>
            <person name="Kanamori-Katayama M."/>
            <person name="Suzuki M."/>
            <person name="Aoki J."/>
            <person name="Arakawa T."/>
            <person name="Iida J."/>
            <person name="Imamura K."/>
            <person name="Itoh M."/>
            <person name="Kato T."/>
            <person name="Kawaji H."/>
            <person name="Kawagashira N."/>
            <person name="Kawashima T."/>
            <person name="Kojima M."/>
            <person name="Kondo S."/>
            <person name="Konno H."/>
            <person name="Nakano K."/>
            <person name="Ninomiya N."/>
            <person name="Nishio T."/>
            <person name="Okada M."/>
            <person name="Plessy C."/>
            <person name="Shibata K."/>
            <person name="Shiraki T."/>
            <person name="Suzuki S."/>
            <person name="Tagami M."/>
            <person name="Waki K."/>
            <person name="Watahiki A."/>
            <person name="Okamura-Oho Y."/>
            <person name="Suzuki H."/>
            <person name="Kawai J."/>
            <person name="Hayashizaki Y."/>
        </authorList>
    </citation>
    <scope>NUCLEOTIDE SEQUENCE [LARGE SCALE MRNA]</scope>
    <source>
        <strain>C57BL/6J</strain>
        <tissue>Brain cortex</tissue>
        <tissue>Cerebellum</tissue>
        <tissue>Embryonic spinal ganglion</tissue>
        <tissue>Eye</tissue>
        <tissue>Hypothalamus</tissue>
        <tissue>Olfactory bulb</tissue>
    </source>
</reference>
<reference key="2">
    <citation type="journal article" date="2004" name="Genome Res.">
        <title>The status, quality, and expansion of the NIH full-length cDNA project: the Mammalian Gene Collection (MGC).</title>
        <authorList>
            <consortium name="The MGC Project Team"/>
        </authorList>
    </citation>
    <scope>NUCLEOTIDE SEQUENCE [LARGE SCALE MRNA]</scope>
    <source>
        <strain>C57BL/6J</strain>
        <tissue>Brain</tissue>
    </source>
</reference>
<reference key="3">
    <citation type="journal article" date="2010" name="Cell">
        <title>A tissue-specific atlas of mouse protein phosphorylation and expression.</title>
        <authorList>
            <person name="Huttlin E.L."/>
            <person name="Jedrychowski M.P."/>
            <person name="Elias J.E."/>
            <person name="Goswami T."/>
            <person name="Rad R."/>
            <person name="Beausoleil S.A."/>
            <person name="Villen J."/>
            <person name="Haas W."/>
            <person name="Sowa M.E."/>
            <person name="Gygi S.P."/>
        </authorList>
    </citation>
    <scope>IDENTIFICATION BY MASS SPECTROMETRY [LARGE SCALE ANALYSIS]</scope>
    <source>
        <tissue>Brain</tissue>
    </source>
</reference>
<proteinExistence type="evidence at protein level"/>